<gene>
    <name type="ordered locus">MPN_647</name>
    <name type="ORF">E09_orf290</name>
    <name type="ORF">MP195</name>
</gene>
<proteinExistence type="inferred from homology"/>
<name>Y647_MYCPN</name>
<comment type="subcellular location">
    <subcellularLocation>
        <location evidence="1">Cell membrane</location>
        <topology evidence="1">Lipid-anchor</topology>
    </subcellularLocation>
</comment>
<comment type="similarity">
    <text evidence="3">Belongs to the MG439/MG440 family.</text>
</comment>
<protein>
    <recommendedName>
        <fullName>Uncharacterized lipoprotein MG439 homolog 1</fullName>
    </recommendedName>
</protein>
<evidence type="ECO:0000255" key="1">
    <source>
        <dbReference type="PROSITE-ProRule" id="PRU00303"/>
    </source>
</evidence>
<evidence type="ECO:0000256" key="2">
    <source>
        <dbReference type="SAM" id="MobiDB-lite"/>
    </source>
</evidence>
<evidence type="ECO:0000305" key="3"/>
<sequence>MNKKSILSKTSLGSLFFLFGTALSACSSATTEVISSFSSAQKYFSANKKELNKRNLVTILKDSYNSDPKSTVNSLLAGWKYSLLDQKLLENPMDPSRFSKAFGSNTKDDVNPNISEKGLYLAETYPGVSSQIAQVLGVQSQKVTGFSYSWTSKTKFEVKILIKMKGKVGSDGTSQTLIKSFLGTDSKGSGSNNQNGGVTEKDFEGDQANFDGNFIFTYTQPSDGRRLASNNFDPITGTINFPADLQIEVSTSHEKLNTLMTTNTQVGMIKNRSFKGKSFNLLPFFYYALL</sequence>
<keyword id="KW-1003">Cell membrane</keyword>
<keyword id="KW-0449">Lipoprotein</keyword>
<keyword id="KW-0472">Membrane</keyword>
<keyword id="KW-0564">Palmitate</keyword>
<keyword id="KW-1185">Reference proteome</keyword>
<keyword id="KW-0732">Signal</keyword>
<dbReference type="EMBL" id="U00089">
    <property type="protein sequence ID" value="AAB95843.1"/>
    <property type="molecule type" value="Genomic_DNA"/>
</dbReference>
<dbReference type="PIR" id="S73521">
    <property type="entry name" value="S73521"/>
</dbReference>
<dbReference type="RefSeq" id="NP_110336.1">
    <property type="nucleotide sequence ID" value="NC_000912.1"/>
</dbReference>
<dbReference type="RefSeq" id="WP_010875004.1">
    <property type="nucleotide sequence ID" value="NZ_OU342337.1"/>
</dbReference>
<dbReference type="STRING" id="272634.MPN_647"/>
<dbReference type="EnsemblBacteria" id="AAB95843">
    <property type="protein sequence ID" value="AAB95843"/>
    <property type="gene ID" value="MPN_647"/>
</dbReference>
<dbReference type="KEGG" id="mpn:MPN_647"/>
<dbReference type="PATRIC" id="fig|272634.6.peg.710"/>
<dbReference type="HOGENOM" id="CLU_080699_0_0_14"/>
<dbReference type="OrthoDB" id="403129at2"/>
<dbReference type="BioCyc" id="MPNE272634:G1GJ3-1032-MONOMER"/>
<dbReference type="Proteomes" id="UP000000808">
    <property type="component" value="Chromosome"/>
</dbReference>
<dbReference type="GO" id="GO:0005886">
    <property type="term" value="C:plasma membrane"/>
    <property type="evidence" value="ECO:0007669"/>
    <property type="project" value="UniProtKB-SubCell"/>
</dbReference>
<dbReference type="InterPro" id="IPR001595">
    <property type="entry name" value="Lipoprotein_3"/>
</dbReference>
<dbReference type="Pfam" id="PF00938">
    <property type="entry name" value="Lipoprotein_3"/>
    <property type="match status" value="1"/>
</dbReference>
<dbReference type="PROSITE" id="PS51257">
    <property type="entry name" value="PROKAR_LIPOPROTEIN"/>
    <property type="match status" value="1"/>
</dbReference>
<feature type="signal peptide" evidence="1">
    <location>
        <begin position="1"/>
        <end position="25"/>
    </location>
</feature>
<feature type="chain" id="PRO_0000014043" description="Uncharacterized lipoprotein MG439 homolog 1">
    <location>
        <begin position="26"/>
        <end position="290"/>
    </location>
</feature>
<feature type="region of interest" description="Disordered" evidence="2">
    <location>
        <begin position="183"/>
        <end position="203"/>
    </location>
</feature>
<feature type="compositionally biased region" description="Low complexity" evidence="2">
    <location>
        <begin position="186"/>
        <end position="197"/>
    </location>
</feature>
<feature type="lipid moiety-binding region" description="N-palmitoyl cysteine" evidence="1">
    <location>
        <position position="26"/>
    </location>
</feature>
<feature type="lipid moiety-binding region" description="S-diacylglycerol cysteine" evidence="1">
    <location>
        <position position="26"/>
    </location>
</feature>
<organism>
    <name type="scientific">Mycoplasma pneumoniae (strain ATCC 29342 / M129 / Subtype 1)</name>
    <name type="common">Mycoplasmoides pneumoniae</name>
    <dbReference type="NCBI Taxonomy" id="272634"/>
    <lineage>
        <taxon>Bacteria</taxon>
        <taxon>Bacillati</taxon>
        <taxon>Mycoplasmatota</taxon>
        <taxon>Mycoplasmoidales</taxon>
        <taxon>Mycoplasmoidaceae</taxon>
        <taxon>Mycoplasmoides</taxon>
    </lineage>
</organism>
<reference key="1">
    <citation type="journal article" date="1996" name="Nucleic Acids Res.">
        <title>Complete sequence analysis of the genome of the bacterium Mycoplasma pneumoniae.</title>
        <authorList>
            <person name="Himmelreich R."/>
            <person name="Hilbert H."/>
            <person name="Plagens H."/>
            <person name="Pirkl E."/>
            <person name="Li B.-C."/>
            <person name="Herrmann R."/>
        </authorList>
    </citation>
    <scope>NUCLEOTIDE SEQUENCE [LARGE SCALE GENOMIC DNA]</scope>
    <source>
        <strain>ATCC 29342 / M129 / Subtype 1</strain>
    </source>
</reference>
<accession>P75150</accession>